<evidence type="ECO:0000305" key="1"/>
<protein>
    <recommendedName>
        <fullName>Fatty acid-binding protein type 3</fullName>
    </recommendedName>
</protein>
<comment type="similarity">
    <text evidence="1">Belongs to the calycin superfamily. Fatty-acid binding protein (FABP) family.</text>
</comment>
<name>FABP3_FASHE</name>
<organism>
    <name type="scientific">Fasciola hepatica</name>
    <name type="common">Liver fluke</name>
    <dbReference type="NCBI Taxonomy" id="6192"/>
    <lineage>
        <taxon>Eukaryota</taxon>
        <taxon>Metazoa</taxon>
        <taxon>Spiralia</taxon>
        <taxon>Lophotrochozoa</taxon>
        <taxon>Platyhelminthes</taxon>
        <taxon>Trematoda</taxon>
        <taxon>Digenea</taxon>
        <taxon>Plagiorchiida</taxon>
        <taxon>Echinostomata</taxon>
        <taxon>Echinostomatoidea</taxon>
        <taxon>Fasciolidae</taxon>
        <taxon>Fasciola</taxon>
    </lineage>
</organism>
<feature type="chain" id="PRO_0000067356" description="Fatty acid-binding protein type 3">
    <location>
        <begin position="1"/>
        <end position="132"/>
    </location>
</feature>
<accession>Q9U1G6</accession>
<sequence length="132" mass="14623">MANFVGSWKLEQSENMDAVLQKLGINVIKRKLITSSKPEITFTLEGNKMTMKTVSALKTTVISFTFGEEFKEETADGRTVMTTFTKDSDSKISQVQKCPENTTHVVREVTGGKMIATVTVGDVKAVNNYHKV</sequence>
<reference key="1">
    <citation type="submission" date="1999-10" db="EMBL/GenBank/DDBJ databases">
        <title>A new fatty acid binding protein isoform from Fasciola hepatica.</title>
        <authorList>
            <person name="Diaz Ruiz de Eguino A."/>
            <person name="Casais R."/>
            <person name="Martin-Alonso J.M."/>
            <person name="Parra F."/>
        </authorList>
    </citation>
    <scope>NUCLEOTIDE SEQUENCE [MRNA]</scope>
</reference>
<proteinExistence type="evidence at transcript level"/>
<keyword id="KW-0446">Lipid-binding</keyword>
<keyword id="KW-0813">Transport</keyword>
<dbReference type="EMBL" id="AJ250098">
    <property type="protein sequence ID" value="CAB65015.1"/>
    <property type="molecule type" value="mRNA"/>
</dbReference>
<dbReference type="SMR" id="Q9U1G6"/>
<dbReference type="GO" id="GO:0008289">
    <property type="term" value="F:lipid binding"/>
    <property type="evidence" value="ECO:0007669"/>
    <property type="project" value="UniProtKB-KW"/>
</dbReference>
<dbReference type="CDD" id="cd00742">
    <property type="entry name" value="FABP"/>
    <property type="match status" value="1"/>
</dbReference>
<dbReference type="FunFam" id="2.40.128.20:FF:000001">
    <property type="entry name" value="Fatty acid-binding protein, adipocyte"/>
    <property type="match status" value="1"/>
</dbReference>
<dbReference type="Gene3D" id="2.40.128.20">
    <property type="match status" value="1"/>
</dbReference>
<dbReference type="InterPro" id="IPR012674">
    <property type="entry name" value="Calycin"/>
</dbReference>
<dbReference type="InterPro" id="IPR000463">
    <property type="entry name" value="Fatty_acid-bd"/>
</dbReference>
<dbReference type="InterPro" id="IPR031259">
    <property type="entry name" value="ILBP"/>
</dbReference>
<dbReference type="InterPro" id="IPR000566">
    <property type="entry name" value="Lipocln_cytosolic_FA-bd_dom"/>
</dbReference>
<dbReference type="PANTHER" id="PTHR11955">
    <property type="entry name" value="FATTY ACID BINDING PROTEIN"/>
    <property type="match status" value="1"/>
</dbReference>
<dbReference type="Pfam" id="PF00061">
    <property type="entry name" value="Lipocalin"/>
    <property type="match status" value="1"/>
</dbReference>
<dbReference type="PRINTS" id="PR00178">
    <property type="entry name" value="FATTYACIDBP"/>
</dbReference>
<dbReference type="SUPFAM" id="SSF50814">
    <property type="entry name" value="Lipocalins"/>
    <property type="match status" value="1"/>
</dbReference>